<protein>
    <recommendedName>
        <fullName evidence="1">Small ribosomal subunit protein uS10</fullName>
    </recommendedName>
    <alternativeName>
        <fullName evidence="2">30S ribosomal protein S10</fullName>
    </alternativeName>
</protein>
<name>RS10_LACDA</name>
<gene>
    <name evidence="1" type="primary">rpsJ</name>
    <name type="ordered locus">Ldb0395</name>
</gene>
<reference key="1">
    <citation type="journal article" date="2006" name="Proc. Natl. Acad. Sci. U.S.A.">
        <title>The complete genome sequence of Lactobacillus bulgaricus reveals extensive and ongoing reductive evolution.</title>
        <authorList>
            <person name="van de Guchte M."/>
            <person name="Penaud S."/>
            <person name="Grimaldi C."/>
            <person name="Barbe V."/>
            <person name="Bryson K."/>
            <person name="Nicolas P."/>
            <person name="Robert C."/>
            <person name="Oztas S."/>
            <person name="Mangenot S."/>
            <person name="Couloux A."/>
            <person name="Loux V."/>
            <person name="Dervyn R."/>
            <person name="Bossy R."/>
            <person name="Bolotin A."/>
            <person name="Batto J.-M."/>
            <person name="Walunas T."/>
            <person name="Gibrat J.-F."/>
            <person name="Bessieres P."/>
            <person name="Weissenbach J."/>
            <person name="Ehrlich S.D."/>
            <person name="Maguin E."/>
        </authorList>
    </citation>
    <scope>NUCLEOTIDE SEQUENCE [LARGE SCALE GENOMIC DNA]</scope>
    <source>
        <strain>ATCC 11842 / DSM 20081 / BCRC 10696 / JCM 1002 / NBRC 13953 / NCIMB 11778 / NCTC 12712 / WDCM 00102 / Lb 14</strain>
    </source>
</reference>
<evidence type="ECO:0000255" key="1">
    <source>
        <dbReference type="HAMAP-Rule" id="MF_00508"/>
    </source>
</evidence>
<evidence type="ECO:0000305" key="2"/>
<accession>Q1GBL9</accession>
<sequence length="102" mass="11577">MANEKIRIRLKSYEHSILDESGAKIVDTAKRTGAEISGPVPLPTERTLFTVLRSPHKNKDSREQFEMRTHKRLIDILNPTPKTVDSLMKLDLPSGVDIEIKL</sequence>
<dbReference type="EMBL" id="CR954253">
    <property type="protein sequence ID" value="CAI97230.1"/>
    <property type="molecule type" value="Genomic_DNA"/>
</dbReference>
<dbReference type="RefSeq" id="WP_003622468.1">
    <property type="nucleotide sequence ID" value="NZ_JQAV01000001.1"/>
</dbReference>
<dbReference type="SMR" id="Q1GBL9"/>
<dbReference type="STRING" id="390333.Ldb0395"/>
<dbReference type="KEGG" id="ldb:Ldb0395"/>
<dbReference type="PATRIC" id="fig|390333.13.peg.395"/>
<dbReference type="eggNOG" id="COG0051">
    <property type="taxonomic scope" value="Bacteria"/>
</dbReference>
<dbReference type="HOGENOM" id="CLU_122625_1_3_9"/>
<dbReference type="BioCyc" id="LDEL390333:LDB_RS01670-MONOMER"/>
<dbReference type="Proteomes" id="UP000001259">
    <property type="component" value="Chromosome"/>
</dbReference>
<dbReference type="GO" id="GO:1990904">
    <property type="term" value="C:ribonucleoprotein complex"/>
    <property type="evidence" value="ECO:0007669"/>
    <property type="project" value="UniProtKB-KW"/>
</dbReference>
<dbReference type="GO" id="GO:0005840">
    <property type="term" value="C:ribosome"/>
    <property type="evidence" value="ECO:0007669"/>
    <property type="project" value="UniProtKB-KW"/>
</dbReference>
<dbReference type="GO" id="GO:0003735">
    <property type="term" value="F:structural constituent of ribosome"/>
    <property type="evidence" value="ECO:0007669"/>
    <property type="project" value="InterPro"/>
</dbReference>
<dbReference type="GO" id="GO:0000049">
    <property type="term" value="F:tRNA binding"/>
    <property type="evidence" value="ECO:0007669"/>
    <property type="project" value="UniProtKB-UniRule"/>
</dbReference>
<dbReference type="GO" id="GO:0006412">
    <property type="term" value="P:translation"/>
    <property type="evidence" value="ECO:0007669"/>
    <property type="project" value="UniProtKB-UniRule"/>
</dbReference>
<dbReference type="FunFam" id="3.30.70.600:FF:000001">
    <property type="entry name" value="30S ribosomal protein S10"/>
    <property type="match status" value="1"/>
</dbReference>
<dbReference type="Gene3D" id="3.30.70.600">
    <property type="entry name" value="Ribosomal protein S10 domain"/>
    <property type="match status" value="1"/>
</dbReference>
<dbReference type="HAMAP" id="MF_00508">
    <property type="entry name" value="Ribosomal_uS10"/>
    <property type="match status" value="1"/>
</dbReference>
<dbReference type="InterPro" id="IPR001848">
    <property type="entry name" value="Ribosomal_uS10"/>
</dbReference>
<dbReference type="InterPro" id="IPR018268">
    <property type="entry name" value="Ribosomal_uS10_CS"/>
</dbReference>
<dbReference type="InterPro" id="IPR027486">
    <property type="entry name" value="Ribosomal_uS10_dom"/>
</dbReference>
<dbReference type="InterPro" id="IPR036838">
    <property type="entry name" value="Ribosomal_uS10_dom_sf"/>
</dbReference>
<dbReference type="NCBIfam" id="NF001861">
    <property type="entry name" value="PRK00596.1"/>
    <property type="match status" value="1"/>
</dbReference>
<dbReference type="NCBIfam" id="TIGR01049">
    <property type="entry name" value="rpsJ_bact"/>
    <property type="match status" value="1"/>
</dbReference>
<dbReference type="PANTHER" id="PTHR11700">
    <property type="entry name" value="30S RIBOSOMAL PROTEIN S10 FAMILY MEMBER"/>
    <property type="match status" value="1"/>
</dbReference>
<dbReference type="Pfam" id="PF00338">
    <property type="entry name" value="Ribosomal_S10"/>
    <property type="match status" value="1"/>
</dbReference>
<dbReference type="PRINTS" id="PR00971">
    <property type="entry name" value="RIBOSOMALS10"/>
</dbReference>
<dbReference type="SMART" id="SM01403">
    <property type="entry name" value="Ribosomal_S10"/>
    <property type="match status" value="1"/>
</dbReference>
<dbReference type="SUPFAM" id="SSF54999">
    <property type="entry name" value="Ribosomal protein S10"/>
    <property type="match status" value="1"/>
</dbReference>
<dbReference type="PROSITE" id="PS00361">
    <property type="entry name" value="RIBOSOMAL_S10"/>
    <property type="match status" value="1"/>
</dbReference>
<keyword id="KW-1185">Reference proteome</keyword>
<keyword id="KW-0687">Ribonucleoprotein</keyword>
<keyword id="KW-0689">Ribosomal protein</keyword>
<organism>
    <name type="scientific">Lactobacillus delbrueckii subsp. bulgaricus (strain ATCC 11842 / DSM 20081 / BCRC 10696 / JCM 1002 / NBRC 13953 / NCIMB 11778 / NCTC 12712 / WDCM 00102 / Lb 14)</name>
    <dbReference type="NCBI Taxonomy" id="390333"/>
    <lineage>
        <taxon>Bacteria</taxon>
        <taxon>Bacillati</taxon>
        <taxon>Bacillota</taxon>
        <taxon>Bacilli</taxon>
        <taxon>Lactobacillales</taxon>
        <taxon>Lactobacillaceae</taxon>
        <taxon>Lactobacillus</taxon>
    </lineage>
</organism>
<proteinExistence type="inferred from homology"/>
<comment type="function">
    <text evidence="1">Involved in the binding of tRNA to the ribosomes.</text>
</comment>
<comment type="subunit">
    <text evidence="1">Part of the 30S ribosomal subunit.</text>
</comment>
<comment type="similarity">
    <text evidence="1">Belongs to the universal ribosomal protein uS10 family.</text>
</comment>
<feature type="chain" id="PRO_0000258553" description="Small ribosomal subunit protein uS10">
    <location>
        <begin position="1"/>
        <end position="102"/>
    </location>
</feature>